<name>GXCI_DICDI</name>
<proteinExistence type="inferred from homology"/>
<dbReference type="EMBL" id="AAFI02000111">
    <property type="protein sequence ID" value="EAL63217.3"/>
    <property type="molecule type" value="Genomic_DNA"/>
</dbReference>
<dbReference type="RefSeq" id="XP_636719.3">
    <property type="nucleotide sequence ID" value="XM_631627.3"/>
</dbReference>
<dbReference type="SMR" id="Q54J11"/>
<dbReference type="FunCoup" id="Q54J11">
    <property type="interactions" value="772"/>
</dbReference>
<dbReference type="STRING" id="44689.Q54J11"/>
<dbReference type="GlyGen" id="Q54J11">
    <property type="glycosylation" value="3 sites"/>
</dbReference>
<dbReference type="PaxDb" id="44689-DDB0304693"/>
<dbReference type="EnsemblProtists" id="EAL63217">
    <property type="protein sequence ID" value="EAL63217"/>
    <property type="gene ID" value="DDB_G0288383"/>
</dbReference>
<dbReference type="GeneID" id="8626595"/>
<dbReference type="KEGG" id="ddi:DDB_G0288383"/>
<dbReference type="dictyBase" id="DDB_G0288383">
    <property type="gene designation" value="gxcI"/>
</dbReference>
<dbReference type="VEuPathDB" id="AmoebaDB:DDB_G0288383"/>
<dbReference type="eggNOG" id="KOG3519">
    <property type="taxonomic scope" value="Eukaryota"/>
</dbReference>
<dbReference type="HOGENOM" id="CLU_285976_0_0_1"/>
<dbReference type="InParanoid" id="Q54J11"/>
<dbReference type="OMA" id="RCWQENI"/>
<dbReference type="Reactome" id="R-DDI-193648">
    <property type="pathway name" value="NRAGE signals death through JNK"/>
</dbReference>
<dbReference type="Reactome" id="R-DDI-9013148">
    <property type="pathway name" value="CDC42 GTPase cycle"/>
</dbReference>
<dbReference type="Reactome" id="R-DDI-9013149">
    <property type="pathway name" value="RAC1 GTPase cycle"/>
</dbReference>
<dbReference type="Reactome" id="R-DDI-9013406">
    <property type="pathway name" value="RHOQ GTPase cycle"/>
</dbReference>
<dbReference type="PRO" id="PR:Q54J11"/>
<dbReference type="Proteomes" id="UP000002195">
    <property type="component" value="Chromosome 5"/>
</dbReference>
<dbReference type="GO" id="GO:0005829">
    <property type="term" value="C:cytosol"/>
    <property type="evidence" value="ECO:0000318"/>
    <property type="project" value="GO_Central"/>
</dbReference>
<dbReference type="GO" id="GO:0005085">
    <property type="term" value="F:guanyl-nucleotide exchange factor activity"/>
    <property type="evidence" value="ECO:0000318"/>
    <property type="project" value="GO_Central"/>
</dbReference>
<dbReference type="CDD" id="cd00160">
    <property type="entry name" value="RhoGEF"/>
    <property type="match status" value="1"/>
</dbReference>
<dbReference type="Gene3D" id="1.20.900.10">
    <property type="entry name" value="Dbl homology (DH) domain"/>
    <property type="match status" value="1"/>
</dbReference>
<dbReference type="InterPro" id="IPR035899">
    <property type="entry name" value="DBL_dom_sf"/>
</dbReference>
<dbReference type="InterPro" id="IPR000219">
    <property type="entry name" value="DH_dom"/>
</dbReference>
<dbReference type="InterPro" id="IPR053086">
    <property type="entry name" value="RhoGEF_domain"/>
</dbReference>
<dbReference type="PANTHER" id="PTHR45834">
    <property type="entry name" value="RHO GUANINE NUCLEOTIDE EXCHANGE FACTOR 9-RELATED"/>
    <property type="match status" value="1"/>
</dbReference>
<dbReference type="PANTHER" id="PTHR45834:SF13">
    <property type="entry name" value="RHOGEF DOMAIN-CONTAINING PROTEIN GXCI"/>
    <property type="match status" value="1"/>
</dbReference>
<dbReference type="Pfam" id="PF00621">
    <property type="entry name" value="RhoGEF"/>
    <property type="match status" value="1"/>
</dbReference>
<dbReference type="SMART" id="SM00325">
    <property type="entry name" value="RhoGEF"/>
    <property type="match status" value="1"/>
</dbReference>
<dbReference type="SUPFAM" id="SSF48065">
    <property type="entry name" value="DBL homology domain (DH-domain)"/>
    <property type="match status" value="1"/>
</dbReference>
<dbReference type="PROSITE" id="PS50010">
    <property type="entry name" value="DH_2"/>
    <property type="match status" value="1"/>
</dbReference>
<reference key="1">
    <citation type="journal article" date="2005" name="Nature">
        <title>The genome of the social amoeba Dictyostelium discoideum.</title>
        <authorList>
            <person name="Eichinger L."/>
            <person name="Pachebat J.A."/>
            <person name="Gloeckner G."/>
            <person name="Rajandream M.A."/>
            <person name="Sucgang R."/>
            <person name="Berriman M."/>
            <person name="Song J."/>
            <person name="Olsen R."/>
            <person name="Szafranski K."/>
            <person name="Xu Q."/>
            <person name="Tunggal B."/>
            <person name="Kummerfeld S."/>
            <person name="Madera M."/>
            <person name="Konfortov B.A."/>
            <person name="Rivero F."/>
            <person name="Bankier A.T."/>
            <person name="Lehmann R."/>
            <person name="Hamlin N."/>
            <person name="Davies R."/>
            <person name="Gaudet P."/>
            <person name="Fey P."/>
            <person name="Pilcher K."/>
            <person name="Chen G."/>
            <person name="Saunders D."/>
            <person name="Sodergren E.J."/>
            <person name="Davis P."/>
            <person name="Kerhornou A."/>
            <person name="Nie X."/>
            <person name="Hall N."/>
            <person name="Anjard C."/>
            <person name="Hemphill L."/>
            <person name="Bason N."/>
            <person name="Farbrother P."/>
            <person name="Desany B."/>
            <person name="Just E."/>
            <person name="Morio T."/>
            <person name="Rost R."/>
            <person name="Churcher C.M."/>
            <person name="Cooper J."/>
            <person name="Haydock S."/>
            <person name="van Driessche N."/>
            <person name="Cronin A."/>
            <person name="Goodhead I."/>
            <person name="Muzny D.M."/>
            <person name="Mourier T."/>
            <person name="Pain A."/>
            <person name="Lu M."/>
            <person name="Harper D."/>
            <person name="Lindsay R."/>
            <person name="Hauser H."/>
            <person name="James K.D."/>
            <person name="Quiles M."/>
            <person name="Madan Babu M."/>
            <person name="Saito T."/>
            <person name="Buchrieser C."/>
            <person name="Wardroper A."/>
            <person name="Felder M."/>
            <person name="Thangavelu M."/>
            <person name="Johnson D."/>
            <person name="Knights A."/>
            <person name="Loulseged H."/>
            <person name="Mungall K.L."/>
            <person name="Oliver K."/>
            <person name="Price C."/>
            <person name="Quail M.A."/>
            <person name="Urushihara H."/>
            <person name="Hernandez J."/>
            <person name="Rabbinowitsch E."/>
            <person name="Steffen D."/>
            <person name="Sanders M."/>
            <person name="Ma J."/>
            <person name="Kohara Y."/>
            <person name="Sharp S."/>
            <person name="Simmonds M.N."/>
            <person name="Spiegler S."/>
            <person name="Tivey A."/>
            <person name="Sugano S."/>
            <person name="White B."/>
            <person name="Walker D."/>
            <person name="Woodward J.R."/>
            <person name="Winckler T."/>
            <person name="Tanaka Y."/>
            <person name="Shaulsky G."/>
            <person name="Schleicher M."/>
            <person name="Weinstock G.M."/>
            <person name="Rosenthal A."/>
            <person name="Cox E.C."/>
            <person name="Chisholm R.L."/>
            <person name="Gibbs R.A."/>
            <person name="Loomis W.F."/>
            <person name="Platzer M."/>
            <person name="Kay R.R."/>
            <person name="Williams J.G."/>
            <person name="Dear P.H."/>
            <person name="Noegel A.A."/>
            <person name="Barrell B.G."/>
            <person name="Kuspa A."/>
        </authorList>
    </citation>
    <scope>NUCLEOTIDE SEQUENCE [LARGE SCALE GENOMIC DNA]</scope>
    <source>
        <strain>AX4</strain>
    </source>
</reference>
<evidence type="ECO:0000250" key="1"/>
<evidence type="ECO:0000255" key="2">
    <source>
        <dbReference type="PROSITE-ProRule" id="PRU00062"/>
    </source>
</evidence>
<evidence type="ECO:0000256" key="3">
    <source>
        <dbReference type="SAM" id="MobiDB-lite"/>
    </source>
</evidence>
<keyword id="KW-0344">Guanine-nucleotide releasing factor</keyword>
<keyword id="KW-1185">Reference proteome</keyword>
<feature type="chain" id="PRO_0000377435" description="RhoGEF domain-containing protein gxcI">
    <location>
        <begin position="1"/>
        <end position="1082"/>
    </location>
</feature>
<feature type="domain" description="DH" evidence="2">
    <location>
        <begin position="622"/>
        <end position="817"/>
    </location>
</feature>
<feature type="region of interest" description="Disordered" evidence="3">
    <location>
        <begin position="1"/>
        <end position="29"/>
    </location>
</feature>
<feature type="region of interest" description="Disordered" evidence="3">
    <location>
        <begin position="59"/>
        <end position="78"/>
    </location>
</feature>
<feature type="region of interest" description="Disordered" evidence="3">
    <location>
        <begin position="91"/>
        <end position="394"/>
    </location>
</feature>
<feature type="region of interest" description="Disordered" evidence="3">
    <location>
        <begin position="438"/>
        <end position="488"/>
    </location>
</feature>
<feature type="region of interest" description="Disordered" evidence="3">
    <location>
        <begin position="504"/>
        <end position="524"/>
    </location>
</feature>
<feature type="region of interest" description="PH-like">
    <location>
        <begin position="838"/>
        <end position="994"/>
    </location>
</feature>
<feature type="region of interest" description="Disordered" evidence="3">
    <location>
        <begin position="920"/>
        <end position="961"/>
    </location>
</feature>
<feature type="region of interest" description="Disordered" evidence="3">
    <location>
        <begin position="1017"/>
        <end position="1060"/>
    </location>
</feature>
<feature type="compositionally biased region" description="Polar residues" evidence="3">
    <location>
        <begin position="1"/>
        <end position="15"/>
    </location>
</feature>
<feature type="compositionally biased region" description="Low complexity" evidence="3">
    <location>
        <begin position="20"/>
        <end position="29"/>
    </location>
</feature>
<feature type="compositionally biased region" description="Low complexity" evidence="3">
    <location>
        <begin position="62"/>
        <end position="71"/>
    </location>
</feature>
<feature type="compositionally biased region" description="Low complexity" evidence="3">
    <location>
        <begin position="96"/>
        <end position="109"/>
    </location>
</feature>
<feature type="compositionally biased region" description="Low complexity" evidence="3">
    <location>
        <begin position="116"/>
        <end position="160"/>
    </location>
</feature>
<feature type="compositionally biased region" description="Low complexity" evidence="3">
    <location>
        <begin position="170"/>
        <end position="184"/>
    </location>
</feature>
<feature type="compositionally biased region" description="Pro residues" evidence="3">
    <location>
        <begin position="185"/>
        <end position="206"/>
    </location>
</feature>
<feature type="compositionally biased region" description="Low complexity" evidence="3">
    <location>
        <begin position="211"/>
        <end position="244"/>
    </location>
</feature>
<feature type="compositionally biased region" description="Pro residues" evidence="3">
    <location>
        <begin position="262"/>
        <end position="276"/>
    </location>
</feature>
<feature type="compositionally biased region" description="Low complexity" evidence="3">
    <location>
        <begin position="282"/>
        <end position="366"/>
    </location>
</feature>
<feature type="compositionally biased region" description="Pro residues" evidence="3">
    <location>
        <begin position="367"/>
        <end position="379"/>
    </location>
</feature>
<feature type="compositionally biased region" description="Low complexity" evidence="3">
    <location>
        <begin position="450"/>
        <end position="473"/>
    </location>
</feature>
<accession>Q54J11</accession>
<protein>
    <recommendedName>
        <fullName>RhoGEF domain-containing protein gxcI</fullName>
    </recommendedName>
</protein>
<sequence length="1082" mass="119579">MRKNSTSNPSPSHQFLTPPKNTTTVVNNNNNTFVNKNKIINENSNQKMFSVGSLVNQIDKNQQQQQQQQQQTHQVLPQRKFSGVSTMISKYNEQQPSSSSSTASSSSSPSLPPKPLLSTINNINNSGSANNNTPSNLSPNTLSPTSIIKKNNNNNISGSPSPSPSPAPTPTILSPLPSPRRQLPTRPPSPLPKLPSRPTSPVPPNPDEALNTTTTNNNNNNNNNNNNNNNNNNNNNNNNNNNNNSDNNYISKLGSHSVKTLPIPPPNDKPAPPPRPWSSSGTLTTPPTIATTKTSTNINSTNVKYQTLSPSSTTATTATTTTTINNNVTTPPTTPPSQTIAFNNNNNNNNNNNNNNNNNNNSNNNKPLPPTSTKPPRPKIAPRNDISPIPVTSLSTANITNTPTVVIEQTPIIAPIQDSQNIAASDLRTLRQRTFTRKQASMKLNGEDFSSLSLSTTPTSVSPSTPSSANPTPSTTPPSMSPSNSVSNEFLTINSNENINNDLINSFNSDDSNNSNNSNSSLSLASASSSASTTTTSTNSLNDTSFNNISININPNNGLSVSNFISSHKKKTSFISGTLRRDTLDIKTILIEKINVQYTITTQLSQKPSRKSLLPPINSSTSFNKVIKEIIETEADYIDQMEVIINLYYFAALEMSKYKLMTANDIYQIFSNIEELYYVSLRLYPMLLNIIPVLDHENQYPNIEEIFLYNSKAFQRYGSYLSTHDHSIKVLNSLIDGNNVVNQIFQYVKSLPHSKQLNLQSFLIKPCQRLCKYPLLLRELKKALPPEDDSLEAEEHHKIFQRSLILMEKIVNDINGKMANDNKIQSTVKEIGTKDIEQQLRDQTFLKSSNRIKKLKKKGNKVIVTLYLLSQILIIFEKGTFKKKVKIIPLKNILEIIDIERELQFGISINYLNDNDIQNNNNNNQNNLSSTNDTTSSTPPTTTTTTNSTPTTTTTTTNSTPTVNVNTLSIKLSCDNYQDKLIWLNDIDEAINILKILTGSYKFNVSEKDINININNNNNNNNNNNNNNNNNNNNNNNNNNNNNNNINENNINENNINSNNTSLENSGECINNNINNNNNTSN</sequence>
<comment type="function">
    <text evidence="1">GTPase-activating protein.</text>
</comment>
<comment type="domain">
    <text>The PH-like region is similar to the PH domain but contains an insert. It is unclear whether it is a real PH domain.</text>
</comment>
<organism>
    <name type="scientific">Dictyostelium discoideum</name>
    <name type="common">Social amoeba</name>
    <dbReference type="NCBI Taxonomy" id="44689"/>
    <lineage>
        <taxon>Eukaryota</taxon>
        <taxon>Amoebozoa</taxon>
        <taxon>Evosea</taxon>
        <taxon>Eumycetozoa</taxon>
        <taxon>Dictyostelia</taxon>
        <taxon>Dictyosteliales</taxon>
        <taxon>Dictyosteliaceae</taxon>
        <taxon>Dictyostelium</taxon>
    </lineage>
</organism>
<gene>
    <name type="primary">gxcI</name>
    <name type="ORF">DDB_0233474</name>
</gene>